<organism>
    <name type="scientific">Aspergillus awamori</name>
    <name type="common">Black koji mold</name>
    <dbReference type="NCBI Taxonomy" id="105351"/>
    <lineage>
        <taxon>Eukaryota</taxon>
        <taxon>Fungi</taxon>
        <taxon>Dikarya</taxon>
        <taxon>Ascomycota</taxon>
        <taxon>Pezizomycotina</taxon>
        <taxon>Eurotiomycetes</taxon>
        <taxon>Eurotiomycetidae</taxon>
        <taxon>Eurotiales</taxon>
        <taxon>Aspergillaceae</taxon>
        <taxon>Aspergillus</taxon>
    </lineage>
</organism>
<feature type="signal peptide" evidence="3">
    <location>
        <begin position="1"/>
        <end position="17"/>
    </location>
</feature>
<feature type="chain" id="PRO_0000394602" description="Probable alpha-L-arabinofuranosidase B">
    <location>
        <begin position="18"/>
        <end position="499"/>
    </location>
</feature>
<feature type="region of interest" description="Catalytic" evidence="1">
    <location>
        <begin position="18"/>
        <end position="335"/>
    </location>
</feature>
<feature type="region of interest" description="ABD" evidence="1">
    <location>
        <begin position="336"/>
        <end position="499"/>
    </location>
</feature>
<feature type="active site" description="Nucleophile" evidence="2">
    <location>
        <position position="221"/>
    </location>
</feature>
<feature type="binding site" evidence="2">
    <location>
        <position position="219"/>
    </location>
    <ligand>
        <name>substrate</name>
    </ligand>
</feature>
<feature type="binding site" evidence="2">
    <location>
        <position position="222"/>
    </location>
    <ligand>
        <name>substrate</name>
    </ligand>
</feature>
<feature type="binding site" evidence="2">
    <location>
        <position position="223"/>
    </location>
    <ligand>
        <name>substrate</name>
    </ligand>
</feature>
<feature type="binding site" evidence="2">
    <location>
        <position position="296"/>
    </location>
    <ligand>
        <name>substrate</name>
    </ligand>
</feature>
<feature type="binding site" evidence="2">
    <location>
        <position position="416"/>
    </location>
    <ligand>
        <name>substrate</name>
    </ligand>
</feature>
<feature type="binding site" evidence="2">
    <location>
        <position position="418"/>
    </location>
    <ligand>
        <name>substrate</name>
    </ligand>
</feature>
<feature type="binding site" evidence="2">
    <location>
        <position position="419"/>
    </location>
    <ligand>
        <name>substrate</name>
    </ligand>
</feature>
<feature type="binding site" evidence="2">
    <location>
        <position position="435"/>
    </location>
    <ligand>
        <name>substrate</name>
    </ligand>
</feature>
<feature type="binding site" evidence="2">
    <location>
        <position position="463"/>
    </location>
    <ligand>
        <name>substrate</name>
    </ligand>
</feature>
<feature type="binding site" evidence="2">
    <location>
        <position position="465"/>
    </location>
    <ligand>
        <name>substrate</name>
    </ligand>
</feature>
<feature type="binding site" evidence="2">
    <location>
        <position position="468"/>
    </location>
    <ligand>
        <name>substrate</name>
    </ligand>
</feature>
<feature type="binding site" evidence="2">
    <location>
        <position position="488"/>
    </location>
    <ligand>
        <name>substrate</name>
    </ligand>
</feature>
<feature type="site" description="Cis-peptide bond" evidence="2">
    <location>
        <begin position="176"/>
        <end position="177"/>
    </location>
</feature>
<feature type="glycosylation site" description="N-linked (GlcNAc...) asparagine" evidence="3">
    <location>
        <position position="83"/>
    </location>
</feature>
<feature type="glycosylation site" description="N-linked (GlcNAc...) asparagine" evidence="3">
    <location>
        <position position="202"/>
    </location>
</feature>
<feature type="disulfide bond" evidence="2">
    <location>
        <begin position="21"/>
        <end position="31"/>
    </location>
</feature>
<feature type="disulfide bond" evidence="2">
    <location>
        <begin position="81"/>
        <end position="86"/>
    </location>
</feature>
<feature type="disulfide bond" evidence="2">
    <location>
        <begin position="176"/>
        <end position="177"/>
    </location>
</feature>
<feature type="disulfide bond" evidence="2">
    <location>
        <begin position="401"/>
        <end position="439"/>
    </location>
</feature>
<evidence type="ECO:0000250" key="1"/>
<evidence type="ECO:0000250" key="2">
    <source>
        <dbReference type="UniProtKB" id="Q8NK89"/>
    </source>
</evidence>
<evidence type="ECO:0000255" key="3"/>
<evidence type="ECO:0000305" key="4"/>
<reference key="1">
    <citation type="journal article" date="2003" name="J. Biosci. Bioeng.">
        <title>Role of two alpha-L-arabinofuranosidases in arabinoxylan degradation and characteristics of the encoding genes from shochu koji molds, Aspergillus kawachii and Aspergillus awamori.</title>
        <authorList>
            <person name="Koseki T."/>
            <person name="Okuda M."/>
            <person name="Sudoh S."/>
            <person name="Kizaki Y."/>
            <person name="Iwano K."/>
            <person name="Aramaki I."/>
            <person name="Matsuzawa H."/>
        </authorList>
    </citation>
    <scope>NUCLEOTIDE SEQUENCE [GENOMIC DNA]</scope>
    <scope>PROTEIN SEQUENCE OF 18-27</scope>
    <source>
        <strain>ATCC 38854 / NBRC 4033</strain>
    </source>
</reference>
<dbReference type="EC" id="3.2.1.55"/>
<dbReference type="EMBL" id="AB046701">
    <property type="protein sequence ID" value="BAB21567.1"/>
    <property type="molecule type" value="Genomic_DNA"/>
</dbReference>
<dbReference type="SMR" id="Q9C4B1"/>
<dbReference type="CAZy" id="CBM42">
    <property type="family name" value="Carbohydrate-Binding Module Family 42"/>
</dbReference>
<dbReference type="CAZy" id="GH54">
    <property type="family name" value="Glycoside Hydrolase Family 54"/>
</dbReference>
<dbReference type="GlyCosmos" id="Q9C4B1">
    <property type="glycosylation" value="2 sites, No reported glycans"/>
</dbReference>
<dbReference type="UniPathway" id="UPA00667"/>
<dbReference type="GO" id="GO:0005576">
    <property type="term" value="C:extracellular region"/>
    <property type="evidence" value="ECO:0000250"/>
    <property type="project" value="UniProtKB"/>
</dbReference>
<dbReference type="GO" id="GO:0046556">
    <property type="term" value="F:alpha-L-arabinofuranosidase activity"/>
    <property type="evidence" value="ECO:0000250"/>
    <property type="project" value="UniProtKB"/>
</dbReference>
<dbReference type="GO" id="GO:0031222">
    <property type="term" value="P:arabinan catabolic process"/>
    <property type="evidence" value="ECO:0007669"/>
    <property type="project" value="UniProtKB-UniPathway"/>
</dbReference>
<dbReference type="GO" id="GO:0019566">
    <property type="term" value="P:arabinose metabolic process"/>
    <property type="evidence" value="ECO:0000250"/>
    <property type="project" value="UniProtKB"/>
</dbReference>
<dbReference type="GO" id="GO:0046373">
    <property type="term" value="P:L-arabinose metabolic process"/>
    <property type="evidence" value="ECO:0007669"/>
    <property type="project" value="InterPro"/>
</dbReference>
<dbReference type="GO" id="GO:0045490">
    <property type="term" value="P:pectin catabolic process"/>
    <property type="evidence" value="ECO:0007669"/>
    <property type="project" value="TreeGrafter"/>
</dbReference>
<dbReference type="GO" id="GO:0045493">
    <property type="term" value="P:xylan catabolic process"/>
    <property type="evidence" value="ECO:0007669"/>
    <property type="project" value="UniProtKB-KW"/>
</dbReference>
<dbReference type="CDD" id="cd23399">
    <property type="entry name" value="beta-trefoil_ABD_ABFB"/>
    <property type="match status" value="1"/>
</dbReference>
<dbReference type="FunFam" id="2.60.120.200:FF:000131">
    <property type="entry name" value="Probable alpha-L-arabinofuranosidase B"/>
    <property type="match status" value="1"/>
</dbReference>
<dbReference type="FunFam" id="2.80.10.50:FF:000059">
    <property type="entry name" value="Probable alpha-L-arabinofuranosidase B"/>
    <property type="match status" value="1"/>
</dbReference>
<dbReference type="Gene3D" id="2.60.120.200">
    <property type="match status" value="1"/>
</dbReference>
<dbReference type="Gene3D" id="2.80.10.50">
    <property type="match status" value="1"/>
</dbReference>
<dbReference type="InterPro" id="IPR015289">
    <property type="entry name" value="A-L-arabinofuranosidase_B_cat"/>
</dbReference>
<dbReference type="InterPro" id="IPR038964">
    <property type="entry name" value="ABFB"/>
</dbReference>
<dbReference type="InterPro" id="IPR007934">
    <property type="entry name" value="AbfB_ABD"/>
</dbReference>
<dbReference type="InterPro" id="IPR036195">
    <property type="entry name" value="AbfB_ABD_sf"/>
</dbReference>
<dbReference type="InterPro" id="IPR013320">
    <property type="entry name" value="ConA-like_dom_sf"/>
</dbReference>
<dbReference type="PANTHER" id="PTHR39447">
    <property type="entry name" value="ALPHA-L-ARABINOFURANOSIDASE B"/>
    <property type="match status" value="1"/>
</dbReference>
<dbReference type="PANTHER" id="PTHR39447:SF2">
    <property type="entry name" value="ALPHA-L-ARABINOFURANOSIDASE B"/>
    <property type="match status" value="1"/>
</dbReference>
<dbReference type="Pfam" id="PF05270">
    <property type="entry name" value="AbfB"/>
    <property type="match status" value="1"/>
</dbReference>
<dbReference type="Pfam" id="PF09206">
    <property type="entry name" value="ArabFuran-catal"/>
    <property type="match status" value="1"/>
</dbReference>
<dbReference type="SUPFAM" id="SSF110221">
    <property type="entry name" value="AbfB domain"/>
    <property type="match status" value="1"/>
</dbReference>
<dbReference type="SUPFAM" id="SSF49899">
    <property type="entry name" value="Concanavalin A-like lectins/glucanases"/>
    <property type="match status" value="1"/>
</dbReference>
<protein>
    <recommendedName>
        <fullName>Probable alpha-L-arabinofuranosidase B</fullName>
        <shortName>ABF B</shortName>
        <shortName>Arabinosidase B</shortName>
        <ecNumber>3.2.1.55</ecNumber>
    </recommendedName>
</protein>
<name>ABFB_ASPAW</name>
<proteinExistence type="evidence at protein level"/>
<comment type="function">
    <text evidence="1">Alpha-L-arabinofuranosidase involved in the degradation of arabinoxylan, a major component of plant hemicellulose. Able to hydrolyze 1,5-, 1,3- and 1,2-alpha-linkages not only in L-arabinofuranosyl oligosaccharides, but also in polysaccharides containing terminal non-reducing L-arabinofuranoses in side chains, like L-arabinan, arabinogalactan and arabinoxylan (By similarity).</text>
</comment>
<comment type="catalytic activity">
    <reaction>
        <text>Hydrolysis of terminal non-reducing alpha-L-arabinofuranoside residues in alpha-L-arabinosides.</text>
        <dbReference type="EC" id="3.2.1.55"/>
    </reaction>
</comment>
<comment type="pathway">
    <text>Glycan metabolism; L-arabinan degradation.</text>
</comment>
<comment type="subcellular location">
    <subcellularLocation>
        <location evidence="1">Secreted</location>
    </subcellularLocation>
</comment>
<comment type="domain">
    <text evidence="1">Organized into two domains: an N-terminal catalytic domain and a C-terminal arabinose-binding domain (ABD).</text>
</comment>
<comment type="similarity">
    <text evidence="4">Belongs to the glycosyl hydrolase 54 family.</text>
</comment>
<comment type="caution">
    <text evidence="4">Lacks the conserved Asp residue in position 297 essential for alpha-L-arabinofuranosidase activity. Its enzyme activity is therefore unsure.</text>
</comment>
<keyword id="KW-0119">Carbohydrate metabolism</keyword>
<keyword id="KW-0903">Direct protein sequencing</keyword>
<keyword id="KW-1015">Disulfide bond</keyword>
<keyword id="KW-0325">Glycoprotein</keyword>
<keyword id="KW-0326">Glycosidase</keyword>
<keyword id="KW-0378">Hydrolase</keyword>
<keyword id="KW-0624">Polysaccharide degradation</keyword>
<keyword id="KW-0964">Secreted</keyword>
<keyword id="KW-0732">Signal</keyword>
<keyword id="KW-0858">Xylan degradation</keyword>
<accession>Q9C4B1</accession>
<sequence length="499" mass="52646">MFSRRNLLALGLAATVSAGPCDIYEAGDTPCVAAHSTTRALYSSFSGALYQLQRGSDDTTTTISPLTAGGIADASAQDTFCANTTCLITIIYDQSGNGNHLTQAPPGGFDGPDTDGYDNLASAIGAPVTLNGQKAYGVFMSPGTGYRNNEATGTATGDEAEGMYAVLDGTHYNDACCFDYGNAETSSTDTGAGHMEAIYLGNSTTWGYGAGDGPWIMVDMENNLFSGADEGYNSGDPSISYRFVTAAVKGGADKWAIRGANAASGSLSTYYSGARPDYSGYNPMSKEGAIILGIGGYNSNGAQGTFYEGVMTSGYPSDDTENSVQENIVAAKYVVGSLVSGPSFTSGEVVSLRVTTPGYTTRYIAHTDTTVNTQVVDDDSSTTLKEEASWTVVTGLANSQCFSFESVDTPGSYIRHYNFELLLNANDGTKQFHEDATFCPQAALNGEGTSLRSWSYPTRYFRHYENVLYAASNGGVQTFDSKTSFNNDVSFEIETAFAS</sequence>
<gene>
    <name type="primary">abfB</name>
</gene>